<dbReference type="EC" id="1.1.1.23" evidence="1"/>
<dbReference type="EMBL" id="BX640436">
    <property type="protein sequence ID" value="CAE39546.1"/>
    <property type="molecule type" value="Genomic_DNA"/>
</dbReference>
<dbReference type="SMR" id="Q7W2Y4"/>
<dbReference type="KEGG" id="bpa:BPP4267"/>
<dbReference type="HOGENOM" id="CLU_006732_3_3_4"/>
<dbReference type="UniPathway" id="UPA00031">
    <property type="reaction ID" value="UER00014"/>
</dbReference>
<dbReference type="Proteomes" id="UP000001421">
    <property type="component" value="Chromosome"/>
</dbReference>
<dbReference type="GO" id="GO:0005829">
    <property type="term" value="C:cytosol"/>
    <property type="evidence" value="ECO:0007669"/>
    <property type="project" value="TreeGrafter"/>
</dbReference>
<dbReference type="GO" id="GO:0004399">
    <property type="term" value="F:histidinol dehydrogenase activity"/>
    <property type="evidence" value="ECO:0007669"/>
    <property type="project" value="UniProtKB-UniRule"/>
</dbReference>
<dbReference type="GO" id="GO:0051287">
    <property type="term" value="F:NAD binding"/>
    <property type="evidence" value="ECO:0007669"/>
    <property type="project" value="InterPro"/>
</dbReference>
<dbReference type="GO" id="GO:0008270">
    <property type="term" value="F:zinc ion binding"/>
    <property type="evidence" value="ECO:0007669"/>
    <property type="project" value="UniProtKB-UniRule"/>
</dbReference>
<dbReference type="GO" id="GO:0000105">
    <property type="term" value="P:L-histidine biosynthetic process"/>
    <property type="evidence" value="ECO:0007669"/>
    <property type="project" value="UniProtKB-UniRule"/>
</dbReference>
<dbReference type="CDD" id="cd06572">
    <property type="entry name" value="Histidinol_dh"/>
    <property type="match status" value="1"/>
</dbReference>
<dbReference type="FunFam" id="3.40.50.1980:FF:000010">
    <property type="entry name" value="Histidinol dehydrogenase"/>
    <property type="match status" value="1"/>
</dbReference>
<dbReference type="FunFam" id="3.40.50.1980:FF:000026">
    <property type="entry name" value="Histidinol dehydrogenase"/>
    <property type="match status" value="1"/>
</dbReference>
<dbReference type="Gene3D" id="1.20.5.1300">
    <property type="match status" value="1"/>
</dbReference>
<dbReference type="Gene3D" id="3.40.50.1980">
    <property type="entry name" value="Nitrogenase molybdenum iron protein domain"/>
    <property type="match status" value="2"/>
</dbReference>
<dbReference type="HAMAP" id="MF_01024">
    <property type="entry name" value="HisD"/>
    <property type="match status" value="1"/>
</dbReference>
<dbReference type="InterPro" id="IPR016161">
    <property type="entry name" value="Ald_DH/histidinol_DH"/>
</dbReference>
<dbReference type="InterPro" id="IPR001692">
    <property type="entry name" value="Histidinol_DH_CS"/>
</dbReference>
<dbReference type="InterPro" id="IPR022695">
    <property type="entry name" value="Histidinol_DH_monofunct"/>
</dbReference>
<dbReference type="InterPro" id="IPR012131">
    <property type="entry name" value="Hstdl_DH"/>
</dbReference>
<dbReference type="NCBIfam" id="TIGR00069">
    <property type="entry name" value="hisD"/>
    <property type="match status" value="1"/>
</dbReference>
<dbReference type="PANTHER" id="PTHR21256:SF2">
    <property type="entry name" value="HISTIDINE BIOSYNTHESIS TRIFUNCTIONAL PROTEIN"/>
    <property type="match status" value="1"/>
</dbReference>
<dbReference type="PANTHER" id="PTHR21256">
    <property type="entry name" value="HISTIDINOL DEHYDROGENASE HDH"/>
    <property type="match status" value="1"/>
</dbReference>
<dbReference type="Pfam" id="PF00815">
    <property type="entry name" value="Histidinol_dh"/>
    <property type="match status" value="1"/>
</dbReference>
<dbReference type="PIRSF" id="PIRSF000099">
    <property type="entry name" value="Histidinol_dh"/>
    <property type="match status" value="1"/>
</dbReference>
<dbReference type="PRINTS" id="PR00083">
    <property type="entry name" value="HOLDHDRGNASE"/>
</dbReference>
<dbReference type="SUPFAM" id="SSF53720">
    <property type="entry name" value="ALDH-like"/>
    <property type="match status" value="1"/>
</dbReference>
<dbReference type="PROSITE" id="PS00611">
    <property type="entry name" value="HISOL_DEHYDROGENASE"/>
    <property type="match status" value="1"/>
</dbReference>
<feature type="chain" id="PRO_0000135737" description="Histidinol dehydrogenase">
    <location>
        <begin position="1"/>
        <end position="440"/>
    </location>
</feature>
<feature type="active site" description="Proton acceptor" evidence="1">
    <location>
        <position position="336"/>
    </location>
</feature>
<feature type="active site" description="Proton acceptor" evidence="1">
    <location>
        <position position="337"/>
    </location>
</feature>
<feature type="binding site" evidence="1">
    <location>
        <position position="139"/>
    </location>
    <ligand>
        <name>NAD(+)</name>
        <dbReference type="ChEBI" id="CHEBI:57540"/>
    </ligand>
</feature>
<feature type="binding site" evidence="1">
    <location>
        <position position="200"/>
    </location>
    <ligand>
        <name>NAD(+)</name>
        <dbReference type="ChEBI" id="CHEBI:57540"/>
    </ligand>
</feature>
<feature type="binding site" evidence="1">
    <location>
        <position position="223"/>
    </location>
    <ligand>
        <name>NAD(+)</name>
        <dbReference type="ChEBI" id="CHEBI:57540"/>
    </ligand>
</feature>
<feature type="binding site" evidence="1">
    <location>
        <position position="246"/>
    </location>
    <ligand>
        <name>substrate</name>
    </ligand>
</feature>
<feature type="binding site" evidence="1">
    <location>
        <position position="268"/>
    </location>
    <ligand>
        <name>substrate</name>
    </ligand>
</feature>
<feature type="binding site" evidence="1">
    <location>
        <position position="268"/>
    </location>
    <ligand>
        <name>Zn(2+)</name>
        <dbReference type="ChEBI" id="CHEBI:29105"/>
    </ligand>
</feature>
<feature type="binding site" evidence="1">
    <location>
        <position position="271"/>
    </location>
    <ligand>
        <name>substrate</name>
    </ligand>
</feature>
<feature type="binding site" evidence="1">
    <location>
        <position position="271"/>
    </location>
    <ligand>
        <name>Zn(2+)</name>
        <dbReference type="ChEBI" id="CHEBI:29105"/>
    </ligand>
</feature>
<feature type="binding site" evidence="1">
    <location>
        <position position="337"/>
    </location>
    <ligand>
        <name>substrate</name>
    </ligand>
</feature>
<feature type="binding site" evidence="1">
    <location>
        <position position="370"/>
    </location>
    <ligand>
        <name>substrate</name>
    </ligand>
</feature>
<feature type="binding site" evidence="1">
    <location>
        <position position="370"/>
    </location>
    <ligand>
        <name>Zn(2+)</name>
        <dbReference type="ChEBI" id="CHEBI:29105"/>
    </ligand>
</feature>
<feature type="binding site" evidence="1">
    <location>
        <position position="424"/>
    </location>
    <ligand>
        <name>substrate</name>
    </ligand>
</feature>
<feature type="binding site" evidence="1">
    <location>
        <position position="429"/>
    </location>
    <ligand>
        <name>substrate</name>
    </ligand>
</feature>
<feature type="binding site" evidence="1">
    <location>
        <position position="429"/>
    </location>
    <ligand>
        <name>Zn(2+)</name>
        <dbReference type="ChEBI" id="CHEBI:29105"/>
    </ligand>
</feature>
<accession>Q7W2Y4</accession>
<reference key="1">
    <citation type="journal article" date="2003" name="Nat. Genet.">
        <title>Comparative analysis of the genome sequences of Bordetella pertussis, Bordetella parapertussis and Bordetella bronchiseptica.</title>
        <authorList>
            <person name="Parkhill J."/>
            <person name="Sebaihia M."/>
            <person name="Preston A."/>
            <person name="Murphy L.D."/>
            <person name="Thomson N.R."/>
            <person name="Harris D.E."/>
            <person name="Holden M.T.G."/>
            <person name="Churcher C.M."/>
            <person name="Bentley S.D."/>
            <person name="Mungall K.L."/>
            <person name="Cerdeno-Tarraga A.-M."/>
            <person name="Temple L."/>
            <person name="James K.D."/>
            <person name="Harris B."/>
            <person name="Quail M.A."/>
            <person name="Achtman M."/>
            <person name="Atkin R."/>
            <person name="Baker S."/>
            <person name="Basham D."/>
            <person name="Bason N."/>
            <person name="Cherevach I."/>
            <person name="Chillingworth T."/>
            <person name="Collins M."/>
            <person name="Cronin A."/>
            <person name="Davis P."/>
            <person name="Doggett J."/>
            <person name="Feltwell T."/>
            <person name="Goble A."/>
            <person name="Hamlin N."/>
            <person name="Hauser H."/>
            <person name="Holroyd S."/>
            <person name="Jagels K."/>
            <person name="Leather S."/>
            <person name="Moule S."/>
            <person name="Norberczak H."/>
            <person name="O'Neil S."/>
            <person name="Ormond D."/>
            <person name="Price C."/>
            <person name="Rabbinowitsch E."/>
            <person name="Rutter S."/>
            <person name="Sanders M."/>
            <person name="Saunders D."/>
            <person name="Seeger K."/>
            <person name="Sharp S."/>
            <person name="Simmonds M."/>
            <person name="Skelton J."/>
            <person name="Squares R."/>
            <person name="Squares S."/>
            <person name="Stevens K."/>
            <person name="Unwin L."/>
            <person name="Whitehead S."/>
            <person name="Barrell B.G."/>
            <person name="Maskell D.J."/>
        </authorList>
    </citation>
    <scope>NUCLEOTIDE SEQUENCE [LARGE SCALE GENOMIC DNA]</scope>
    <source>
        <strain>12822 / ATCC BAA-587 / NCTC 13253</strain>
    </source>
</reference>
<protein>
    <recommendedName>
        <fullName evidence="1">Histidinol dehydrogenase</fullName>
        <shortName evidence="1">HDH</shortName>
        <ecNumber evidence="1">1.1.1.23</ecNumber>
    </recommendedName>
</protein>
<name>HISX_BORPA</name>
<organism>
    <name type="scientific">Bordetella parapertussis (strain 12822 / ATCC BAA-587 / NCTC 13253)</name>
    <dbReference type="NCBI Taxonomy" id="257311"/>
    <lineage>
        <taxon>Bacteria</taxon>
        <taxon>Pseudomonadati</taxon>
        <taxon>Pseudomonadota</taxon>
        <taxon>Betaproteobacteria</taxon>
        <taxon>Burkholderiales</taxon>
        <taxon>Alcaligenaceae</taxon>
        <taxon>Bordetella</taxon>
    </lineage>
</organism>
<comment type="function">
    <text evidence="1">Catalyzes the sequential NAD-dependent oxidations of L-histidinol to L-histidinaldehyde and then to L-histidine.</text>
</comment>
<comment type="catalytic activity">
    <reaction evidence="1">
        <text>L-histidinol + 2 NAD(+) + H2O = L-histidine + 2 NADH + 3 H(+)</text>
        <dbReference type="Rhea" id="RHEA:20641"/>
        <dbReference type="ChEBI" id="CHEBI:15377"/>
        <dbReference type="ChEBI" id="CHEBI:15378"/>
        <dbReference type="ChEBI" id="CHEBI:57540"/>
        <dbReference type="ChEBI" id="CHEBI:57595"/>
        <dbReference type="ChEBI" id="CHEBI:57699"/>
        <dbReference type="ChEBI" id="CHEBI:57945"/>
        <dbReference type="EC" id="1.1.1.23"/>
    </reaction>
</comment>
<comment type="cofactor">
    <cofactor evidence="1">
        <name>Zn(2+)</name>
        <dbReference type="ChEBI" id="CHEBI:29105"/>
    </cofactor>
    <text evidence="1">Binds 1 zinc ion per subunit.</text>
</comment>
<comment type="pathway">
    <text evidence="1">Amino-acid biosynthesis; L-histidine biosynthesis; L-histidine from 5-phospho-alpha-D-ribose 1-diphosphate: step 9/9.</text>
</comment>
<comment type="similarity">
    <text evidence="1">Belongs to the histidinol dehydrogenase family.</text>
</comment>
<evidence type="ECO:0000255" key="1">
    <source>
        <dbReference type="HAMAP-Rule" id="MF_01024"/>
    </source>
</evidence>
<gene>
    <name evidence="1" type="primary">hisD</name>
    <name type="ordered locus">BPP4267</name>
</gene>
<sequence length="440" mass="46882">MQYHDAMALINRLDSRDPGFKTALSQLLAFEAEQDESIDQAAAGILADVRRRGDAALLEYTQRFDRLAVDDATALEIPQADWHAALDSLPAAQRQALEAAAARVRAYHERQRGETWTYTEADGTMLGQQITALDRVGLYVPGGKAAYPSSVLMNAIPAKVAGVPELIMVTPTPDGVRNPIVLAAAAIAGVDRAFAIGGAQAVGALAYGTATVPAVDKIVGPGNAYVAAAKRRVFGTVGIDMIAGPSEILVICDGKTPADWIAMDLFSQAEHDELAQSILLCPDAAFLAEVEAAIERLLPGMPRADILRVSLANRGALILVRDLEEACAIANDIAPEHLEISTEQPQRWTALIRHAGAIFMGRYSSEALGDYCAGPNHVLPTSRTARFSSPLGVYDFQKRSSLIQVSREGAQTLGRIAAELALGEGLQAHAASAQYRLDQP</sequence>
<keyword id="KW-0028">Amino-acid biosynthesis</keyword>
<keyword id="KW-0368">Histidine biosynthesis</keyword>
<keyword id="KW-0479">Metal-binding</keyword>
<keyword id="KW-0520">NAD</keyword>
<keyword id="KW-0560">Oxidoreductase</keyword>
<keyword id="KW-0862">Zinc</keyword>
<proteinExistence type="inferred from homology"/>